<protein>
    <recommendedName>
        <fullName>Alkane 1-monooxygenase</fullName>
        <ecNumber>1.14.15.3</ecNumber>
    </recommendedName>
    <alternativeName>
        <fullName>Alkane hydroxylase</fullName>
        <shortName>AHs</shortName>
    </alternativeName>
    <alternativeName>
        <fullName>Terminal alkane hydroxylase</fullName>
    </alternativeName>
</protein>
<geneLocation type="plasmid">
    <name>OCT</name>
</geneLocation>
<name>ALKB_ECTOL</name>
<proteinExistence type="evidence at protein level"/>
<evidence type="ECO:0000250" key="1">
    <source>
        <dbReference type="UniProtKB" id="O31250"/>
    </source>
</evidence>
<evidence type="ECO:0000269" key="2">
    <source>
    </source>
</evidence>
<evidence type="ECO:0000269" key="3">
    <source>
    </source>
</evidence>
<evidence type="ECO:0000269" key="4">
    <source>
    </source>
</evidence>
<evidence type="ECO:0000269" key="5">
    <source>
    </source>
</evidence>
<evidence type="ECO:0000305" key="6"/>
<evidence type="ECO:0000305" key="7">
    <source>
    </source>
</evidence>
<keyword id="KW-0997">Cell inner membrane</keyword>
<keyword id="KW-1003">Cell membrane</keyword>
<keyword id="KW-0903">Direct protein sequencing</keyword>
<keyword id="KW-0408">Iron</keyword>
<keyword id="KW-0472">Membrane</keyword>
<keyword id="KW-0479">Metal-binding</keyword>
<keyword id="KW-0503">Monooxygenase</keyword>
<keyword id="KW-0560">Oxidoreductase</keyword>
<keyword id="KW-0614">Plasmid</keyword>
<keyword id="KW-0812">Transmembrane</keyword>
<keyword id="KW-1133">Transmembrane helix</keyword>
<dbReference type="EC" id="1.14.15.3"/>
<dbReference type="EMBL" id="AJ245436">
    <property type="protein sequence ID" value="CAB54050.1"/>
    <property type="molecule type" value="Genomic_DNA"/>
</dbReference>
<dbReference type="PIR" id="A32849">
    <property type="entry name" value="A31266"/>
</dbReference>
<dbReference type="SMR" id="P12691"/>
<dbReference type="TCDB" id="9.B.450.1.1">
    <property type="family name" value="the alkane 1-monooxygenase (a1mo) family"/>
</dbReference>
<dbReference type="BioCyc" id="MetaCyc:MONOMER-3842"/>
<dbReference type="UniPathway" id="UPA00191"/>
<dbReference type="GO" id="GO:0005886">
    <property type="term" value="C:plasma membrane"/>
    <property type="evidence" value="ECO:0007669"/>
    <property type="project" value="UniProtKB-SubCell"/>
</dbReference>
<dbReference type="GO" id="GO:0018685">
    <property type="term" value="F:alkane 1-monooxygenase activity"/>
    <property type="evidence" value="ECO:0007669"/>
    <property type="project" value="RHEA"/>
</dbReference>
<dbReference type="GO" id="GO:0046872">
    <property type="term" value="F:metal ion binding"/>
    <property type="evidence" value="ECO:0007669"/>
    <property type="project" value="UniProtKB-KW"/>
</dbReference>
<dbReference type="GO" id="GO:0043448">
    <property type="term" value="P:alkane catabolic process"/>
    <property type="evidence" value="ECO:0007669"/>
    <property type="project" value="UniProtKB-UniPathway"/>
</dbReference>
<dbReference type="GO" id="GO:0006629">
    <property type="term" value="P:lipid metabolic process"/>
    <property type="evidence" value="ECO:0007669"/>
    <property type="project" value="InterPro"/>
</dbReference>
<dbReference type="CDD" id="cd03512">
    <property type="entry name" value="Alkane-hydroxylase"/>
    <property type="match status" value="1"/>
</dbReference>
<dbReference type="InterPro" id="IPR033885">
    <property type="entry name" value="AlkB/XylM"/>
</dbReference>
<dbReference type="InterPro" id="IPR005804">
    <property type="entry name" value="FA_desaturase_dom"/>
</dbReference>
<dbReference type="PANTHER" id="PTHR38674">
    <property type="entry name" value="ALKANE 1-MONOOXYGENASE 1"/>
    <property type="match status" value="1"/>
</dbReference>
<dbReference type="PANTHER" id="PTHR38674:SF1">
    <property type="entry name" value="ALKANE 1-MONOOXYGENASE 1"/>
    <property type="match status" value="1"/>
</dbReference>
<dbReference type="Pfam" id="PF00487">
    <property type="entry name" value="FA_desaturase"/>
    <property type="match status" value="1"/>
</dbReference>
<sequence length="401" mass="45806">MLEKHRVLDSAPEYVDKKKYLWILSTLWPATPMIGIWLANETGWGIFYGLVLLVWYGALPLLDAMFGEDFNNPPEEVVPKLEKERYYRVLTYLTVPMHYAALIVSAWWVGTQPMSWLEIGALALSLGIVNGLALNTGHELGHKKETFDRWMAKIVLAVVGYGHFFIEHNKGHHRDVATPMDPATSRMGESIYKFSIREIPGAFIRAWGLEEQRLSRRGQSVWSFDNEILQPMIITVILYAVLLALFGPKMLVFLPIQMAFGWWQLTSANYIEHYGLLRQKMEDGRYEHQKPHHSWNSNHIVSNLVLFHLQRHSDHHAHPTRSYQSLRDFPGLPALPTGYPGAFLMAMIPQWFRSVMDPKVVDWAGGDLNKIQIDDSMRETYLKKFGTSSAGHSSSTSAVAS</sequence>
<gene>
    <name type="primary">alkB</name>
</gene>
<feature type="chain" id="PRO_0000185434" description="Alkane 1-monooxygenase">
    <location>
        <begin position="1"/>
        <end position="401"/>
    </location>
</feature>
<feature type="topological domain" description="Cytoplasmic" evidence="7">
    <location>
        <begin position="1"/>
        <end position="20"/>
    </location>
</feature>
<feature type="transmembrane region" description="Helical" evidence="6">
    <location>
        <begin position="21"/>
        <end position="39"/>
    </location>
</feature>
<feature type="topological domain" description="Periplasmic" evidence="7">
    <location>
        <begin position="40"/>
        <end position="41"/>
    </location>
</feature>
<feature type="transmembrane region" description="Helical" evidence="6">
    <location>
        <begin position="42"/>
        <end position="62"/>
    </location>
</feature>
<feature type="topological domain" description="Cytoplasmic" evidence="7">
    <location>
        <begin position="63"/>
        <end position="88"/>
    </location>
</feature>
<feature type="transmembrane region" description="Helical" evidence="6">
    <location>
        <begin position="89"/>
        <end position="111"/>
    </location>
</feature>
<feature type="topological domain" description="Periplasmic" evidence="7">
    <location>
        <begin position="112"/>
        <end position="113"/>
    </location>
</feature>
<feature type="transmembrane region" description="Helical" evidence="6">
    <location>
        <begin position="114"/>
        <end position="134"/>
    </location>
</feature>
<feature type="topological domain" description="Cytoplasmic" evidence="7">
    <location>
        <begin position="135"/>
        <end position="228"/>
    </location>
</feature>
<feature type="transmembrane region" description="Helical" evidence="6">
    <location>
        <begin position="229"/>
        <end position="249"/>
    </location>
</feature>
<feature type="topological domain" description="Periplasmic" evidence="7">
    <location>
        <position position="250"/>
    </location>
</feature>
<feature type="transmembrane region" description="Helical" evidence="6">
    <location>
        <begin position="251"/>
        <end position="270"/>
    </location>
</feature>
<feature type="topological domain" description="Cytoplasmic" evidence="7">
    <location>
        <begin position="271"/>
        <end position="401"/>
    </location>
</feature>
<feature type="binding site" evidence="6">
    <location>
        <position position="138"/>
    </location>
    <ligand>
        <name>Fe cation</name>
        <dbReference type="ChEBI" id="CHEBI:24875"/>
        <label>1</label>
    </ligand>
</feature>
<feature type="binding site" evidence="6">
    <location>
        <position position="142"/>
    </location>
    <ligand>
        <name>Fe cation</name>
        <dbReference type="ChEBI" id="CHEBI:24875"/>
        <label>1</label>
    </ligand>
</feature>
<feature type="binding site" evidence="6">
    <location>
        <position position="168"/>
    </location>
    <ligand>
        <name>Fe cation</name>
        <dbReference type="ChEBI" id="CHEBI:24875"/>
        <label>1</label>
    </ligand>
</feature>
<feature type="binding site" evidence="6">
    <location>
        <position position="172"/>
    </location>
    <ligand>
        <name>Fe cation</name>
        <dbReference type="ChEBI" id="CHEBI:24875"/>
        <label>1</label>
    </ligand>
</feature>
<feature type="binding site" evidence="6">
    <location>
        <position position="173"/>
    </location>
    <ligand>
        <name>Fe cation</name>
        <dbReference type="ChEBI" id="CHEBI:24875"/>
        <label>2</label>
    </ligand>
</feature>
<feature type="binding site" evidence="6">
    <location>
        <position position="312"/>
    </location>
    <ligand>
        <name>Fe cation</name>
        <dbReference type="ChEBI" id="CHEBI:24875"/>
        <label>2</label>
    </ligand>
</feature>
<feature type="binding site" evidence="6">
    <location>
        <position position="315"/>
    </location>
    <ligand>
        <name>Fe cation</name>
        <dbReference type="ChEBI" id="CHEBI:24875"/>
        <label>2</label>
    </ligand>
</feature>
<feature type="binding site" evidence="6">
    <location>
        <position position="316"/>
    </location>
    <ligand>
        <name>Fe cation</name>
        <dbReference type="ChEBI" id="CHEBI:24875"/>
        <label>2</label>
    </ligand>
</feature>
<feature type="mutagenesis site" description="Loss of activity." evidence="3">
    <original>H</original>
    <variation>A</variation>
    <location>
        <position position="138"/>
    </location>
</feature>
<feature type="mutagenesis site" description="Loss of activity." evidence="3">
    <original>H</original>
    <variation>A</variation>
    <location>
        <position position="142"/>
    </location>
</feature>
<feature type="mutagenesis site" description="54% of wild-type activity." evidence="3">
    <original>H</original>
    <variation>A</variation>
    <location>
        <position position="163"/>
    </location>
</feature>
<feature type="mutagenesis site" description="Loss of activity." evidence="3">
    <original>H</original>
    <variation>A</variation>
    <location>
        <position position="168"/>
    </location>
</feature>
<feature type="mutagenesis site" description="Loss of activity." evidence="3">
    <original>H</original>
    <variation>A</variation>
    <location>
        <position position="172"/>
    </location>
</feature>
<feature type="mutagenesis site" description="Loss of activity." evidence="3">
    <original>H</original>
    <variation>A</variation>
    <location>
        <position position="173"/>
    </location>
</feature>
<feature type="mutagenesis site" description="Loss of activity." evidence="3">
    <original>D</original>
    <variation>A</variation>
    <location>
        <position position="181"/>
    </location>
</feature>
<feature type="mutagenesis site" description="33% of wild-type activity." evidence="3">
    <original>H</original>
    <variation>A</variation>
    <location>
        <position position="308"/>
    </location>
</feature>
<feature type="mutagenesis site" description="Loss of activity." evidence="3">
    <original>H</original>
    <variation>A</variation>
    <location>
        <position position="312"/>
    </location>
</feature>
<feature type="mutagenesis site" description="Loss of activity." evidence="3">
    <original>H</original>
    <variation>A</variation>
    <location>
        <position position="315"/>
    </location>
</feature>
<feature type="mutagenesis site" description="Loss of activity." evidence="3">
    <original>H</original>
    <variation>A</variation>
    <location>
        <position position="316"/>
    </location>
</feature>
<feature type="mutagenesis site" description="28% of wild-type activity." evidence="3">
    <original>H</original>
    <variation>A</variation>
    <location>
        <position position="318"/>
    </location>
</feature>
<comment type="function">
    <text evidence="5">Catalyzes the hydroxylation of n-alkanes and fatty acids in the presence of a NADH-rubredoxin reductase and rubredoxin.</text>
</comment>
<comment type="catalytic activity">
    <reaction evidence="1">
        <text>octane + 2 reduced [rubredoxin] + O2 + 2 H(+) = 2 oxidized [rubredoxin] + octan-1-ol + H2O</text>
        <dbReference type="Rhea" id="RHEA:19341"/>
        <dbReference type="Rhea" id="RHEA-COMP:10302"/>
        <dbReference type="Rhea" id="RHEA-COMP:10303"/>
        <dbReference type="ChEBI" id="CHEBI:15377"/>
        <dbReference type="ChEBI" id="CHEBI:15378"/>
        <dbReference type="ChEBI" id="CHEBI:15379"/>
        <dbReference type="ChEBI" id="CHEBI:16188"/>
        <dbReference type="ChEBI" id="CHEBI:17590"/>
        <dbReference type="ChEBI" id="CHEBI:29033"/>
        <dbReference type="ChEBI" id="CHEBI:29034"/>
        <dbReference type="EC" id="1.14.15.3"/>
    </reaction>
</comment>
<comment type="cofactor">
    <cofactor evidence="4 5">
        <name>Fe(3+)</name>
        <dbReference type="ChEBI" id="CHEBI:29034"/>
    </cofactor>
    <text evidence="4 5">Binds 2 Fe(3+) ions per subunit.</text>
</comment>
<comment type="pathway">
    <text>Hydrocarbon metabolism; alkane degradation.</text>
</comment>
<comment type="subcellular location">
    <subcellularLocation>
        <location evidence="6">Cell inner membrane</location>
        <topology evidence="6">Multi-pass membrane protein</topology>
    </subcellularLocation>
</comment>
<comment type="induction">
    <text evidence="2">Induced by AlkS and n-alkanes.</text>
</comment>
<comment type="similarity">
    <text evidence="6">Belongs to the fatty acid desaturase type 1 family. AlkB subfamily.</text>
</comment>
<organism>
    <name type="scientific">Ectopseudomonas oleovorans</name>
    <name type="common">Pseudomonas oleovorans</name>
    <dbReference type="NCBI Taxonomy" id="301"/>
    <lineage>
        <taxon>Bacteria</taxon>
        <taxon>Pseudomonadati</taxon>
        <taxon>Pseudomonadota</taxon>
        <taxon>Gammaproteobacteria</taxon>
        <taxon>Pseudomonadales</taxon>
        <taxon>Pseudomonadaceae</taxon>
        <taxon>Ectopseudomonas</taxon>
    </lineage>
</organism>
<accession>P12691</accession>
<reference key="1">
    <citation type="journal article" date="1989" name="J. Biol. Chem.">
        <title>The Pseudomonas oleovorans alkane hydroxylase gene. Sequence and expression.</title>
        <authorList>
            <person name="Kok M."/>
            <person name="Oldenhuis R."/>
            <person name="van der Linden M.P.G."/>
            <person name="Raathes P."/>
            <person name="Kingma J."/>
            <person name="van Lelyveld P.H."/>
            <person name="Witholt B."/>
        </authorList>
    </citation>
    <scope>NUCLEOTIDE SEQUENCE [GENOMIC DNA]</scope>
    <scope>PROTEIN SEQUENCE OF 1-10</scope>
    <source>
        <strain>GPo1</strain>
    </source>
</reference>
<reference key="2">
    <citation type="journal article" date="1977" name="Arch. Biochem. Biophys.">
        <title>Characterization of the omega-hydroxylase of Pseudomonas oleovorans as a nonheme iron protein.</title>
        <authorList>
            <person name="Ruettinger R.T."/>
            <person name="Griffith G.R."/>
            <person name="Coon M.J."/>
        </authorList>
    </citation>
    <scope>FUNCTION</scope>
    <scope>COFACTOR</scope>
</reference>
<reference key="3">
    <citation type="journal article" date="1992" name="J. Biol. Chem.">
        <title>Topology of the membrane-bound alkane hydroxylase of Pseudomonas oleovorans.</title>
        <authorList>
            <person name="van Beilen J.B."/>
            <person name="Penniga D."/>
            <person name="Witholt B."/>
        </authorList>
    </citation>
    <scope>TOPOLOGY</scope>
</reference>
<reference key="4">
    <citation type="journal article" date="1997" name="Proc. Natl. Acad. Sci. U.S.A.">
        <title>Mossbauer studies of alkane omega-hydroxylase: evidence for a diiron cluster in an integral-membrane enzyme.</title>
        <authorList>
            <person name="Shanklin J."/>
            <person name="Achim C."/>
            <person name="Schmidt H."/>
            <person name="Fox B.G."/>
            <person name="Muenck E."/>
        </authorList>
    </citation>
    <scope>COFACTOR</scope>
</reference>
<reference key="5">
    <citation type="journal article" date="2000" name="Mol. Microbiol.">
        <title>A positive feedback mechanism controls expression of AlkS, the transcriptional regulator of the Pseudomonas oleovorans alkane degradation pathway.</title>
        <authorList>
            <person name="Canosa I."/>
            <person name="Sanchez-Romero J.M."/>
            <person name="Yuste L."/>
            <person name="Rojo F."/>
        </authorList>
    </citation>
    <scope>INDUCTION</scope>
</reference>
<reference key="6">
    <citation type="journal article" date="2003" name="FEBS Lett.">
        <title>Evidence linking the Pseudomonas oleovorans alkane omega-hydroxylase, an integral membrane diiron enzyme, and the fatty acid desaturase family.</title>
        <authorList>
            <person name="Shanklin J."/>
            <person name="Whittle E."/>
        </authorList>
    </citation>
    <scope>MUTAGENESIS OF HIS-138; HIS-142; HIS-163; HIS-168; HIS-172; HIS-173; ASP-181; HIS-308; HIS-312; HIS-315; HIS-316 AND HIS-318</scope>
</reference>